<protein>
    <recommendedName>
        <fullName>Sulfate adenylyltransferase</fullName>
        <ecNumber>2.7.7.4</ecNumber>
    </recommendedName>
    <alternativeName>
        <fullName>ATP-sulfurylase</fullName>
    </alternativeName>
    <alternativeName>
        <fullName>Sulfate adenylate transferase</fullName>
        <shortName>SAT</shortName>
    </alternativeName>
</protein>
<comment type="catalytic activity">
    <reaction evidence="3 4">
        <text>sulfate + ATP + H(+) = adenosine 5'-phosphosulfate + diphosphate</text>
        <dbReference type="Rhea" id="RHEA:18133"/>
        <dbReference type="ChEBI" id="CHEBI:15378"/>
        <dbReference type="ChEBI" id="CHEBI:16189"/>
        <dbReference type="ChEBI" id="CHEBI:30616"/>
        <dbReference type="ChEBI" id="CHEBI:33019"/>
        <dbReference type="ChEBI" id="CHEBI:58243"/>
        <dbReference type="EC" id="2.7.7.4"/>
    </reaction>
</comment>
<comment type="cofactor">
    <cofactor evidence="4">
        <name>Mg(2+)</name>
        <dbReference type="ChEBI" id="CHEBI:18420"/>
    </cofactor>
</comment>
<comment type="activity regulation">
    <text evidence="4">Inhibited by adenosine 5'-phosphosulfate (APS), but not by 3'phosphoadenosine 5'-phosphosulfate (PAPS). Inhibited by AMP, ADP, CTP, GTP, ITP, UTP and anions other than those in group IV.</text>
</comment>
<comment type="biophysicochemical properties">
    <phDependence>
        <text>Optimum pH is 8.2.</text>
    </phDependence>
    <temperatureDependence>
        <text>Optimum temperature is 37 degrees Celsius.</text>
    </temperatureDependence>
</comment>
<comment type="pathway">
    <text>Sulfur metabolism; hydrogen sulfide biosynthesis; sulfite from sulfate: step 1/3.</text>
</comment>
<comment type="similarity">
    <text evidence="1">Belongs to the sulfate adenylyltransferase family.</text>
</comment>
<name>SAT_PYRYE</name>
<dbReference type="EC" id="2.7.7.4"/>
<dbReference type="EMBL" id="AB191688">
    <property type="protein sequence ID" value="BAD52446.1"/>
    <property type="molecule type" value="mRNA"/>
</dbReference>
<dbReference type="SMR" id="Q60FC6"/>
<dbReference type="UniPathway" id="UPA00140">
    <property type="reaction ID" value="UER00204"/>
</dbReference>
<dbReference type="GO" id="GO:0005524">
    <property type="term" value="F:ATP binding"/>
    <property type="evidence" value="ECO:0007669"/>
    <property type="project" value="UniProtKB-KW"/>
</dbReference>
<dbReference type="GO" id="GO:0004781">
    <property type="term" value="F:sulfate adenylyltransferase (ATP) activity"/>
    <property type="evidence" value="ECO:0007669"/>
    <property type="project" value="UniProtKB-EC"/>
</dbReference>
<dbReference type="GO" id="GO:0019344">
    <property type="term" value="P:cysteine biosynthetic process"/>
    <property type="evidence" value="ECO:0007669"/>
    <property type="project" value="UniProtKB-KW"/>
</dbReference>
<dbReference type="GO" id="GO:0070814">
    <property type="term" value="P:hydrogen sulfide biosynthetic process"/>
    <property type="evidence" value="ECO:0007669"/>
    <property type="project" value="UniProtKB-UniPathway"/>
</dbReference>
<dbReference type="GO" id="GO:0009086">
    <property type="term" value="P:methionine biosynthetic process"/>
    <property type="evidence" value="ECO:0007669"/>
    <property type="project" value="UniProtKB-KW"/>
</dbReference>
<dbReference type="GO" id="GO:0000103">
    <property type="term" value="P:sulfate assimilation"/>
    <property type="evidence" value="ECO:0007669"/>
    <property type="project" value="InterPro"/>
</dbReference>
<dbReference type="CDD" id="cd00517">
    <property type="entry name" value="ATPS"/>
    <property type="match status" value="1"/>
</dbReference>
<dbReference type="Gene3D" id="3.40.50.620">
    <property type="entry name" value="HUPs"/>
    <property type="match status" value="1"/>
</dbReference>
<dbReference type="Gene3D" id="3.10.400.10">
    <property type="entry name" value="Sulfate adenylyltransferase"/>
    <property type="match status" value="1"/>
</dbReference>
<dbReference type="InterPro" id="IPR025980">
    <property type="entry name" value="ATP-Sase_PUA-like_dom"/>
</dbReference>
<dbReference type="InterPro" id="IPR015947">
    <property type="entry name" value="PUA-like_sf"/>
</dbReference>
<dbReference type="InterPro" id="IPR014729">
    <property type="entry name" value="Rossmann-like_a/b/a_fold"/>
</dbReference>
<dbReference type="InterPro" id="IPR024951">
    <property type="entry name" value="Sulfurylase_cat_dom"/>
</dbReference>
<dbReference type="InterPro" id="IPR002650">
    <property type="entry name" value="Sulphate_adenylyltransferase"/>
</dbReference>
<dbReference type="PANTHER" id="PTHR43509">
    <property type="match status" value="1"/>
</dbReference>
<dbReference type="PANTHER" id="PTHR43509:SF1">
    <property type="entry name" value="SULFATE ADENYLYLTRANSFERASE"/>
    <property type="match status" value="1"/>
</dbReference>
<dbReference type="Pfam" id="PF01747">
    <property type="entry name" value="ATP-sulfurylase"/>
    <property type="match status" value="1"/>
</dbReference>
<dbReference type="Pfam" id="PF14306">
    <property type="entry name" value="PUA_2"/>
    <property type="match status" value="1"/>
</dbReference>
<dbReference type="SUPFAM" id="SSF52374">
    <property type="entry name" value="Nucleotidylyl transferase"/>
    <property type="match status" value="1"/>
</dbReference>
<dbReference type="SUPFAM" id="SSF88697">
    <property type="entry name" value="PUA domain-like"/>
    <property type="match status" value="1"/>
</dbReference>
<keyword id="KW-0007">Acetylation</keyword>
<keyword id="KW-0028">Amino-acid biosynthesis</keyword>
<keyword id="KW-0067">ATP-binding</keyword>
<keyword id="KW-0198">Cysteine biosynthesis</keyword>
<keyword id="KW-0903">Direct protein sequencing</keyword>
<keyword id="KW-0460">Magnesium</keyword>
<keyword id="KW-0486">Methionine biosynthesis</keyword>
<keyword id="KW-0547">Nucleotide-binding</keyword>
<keyword id="KW-0548">Nucleotidyltransferase</keyword>
<keyword id="KW-0808">Transferase</keyword>
<organism>
    <name type="scientific">Pyropia yezoensis</name>
    <name type="common">Susabi-nori</name>
    <name type="synonym">Porphyra yezoensis</name>
    <dbReference type="NCBI Taxonomy" id="2788"/>
    <lineage>
        <taxon>Eukaryota</taxon>
        <taxon>Rhodophyta</taxon>
        <taxon>Bangiophyceae</taxon>
        <taxon>Bangiales</taxon>
        <taxon>Bangiaceae</taxon>
        <taxon>Pyropia</taxon>
    </lineage>
</organism>
<feature type="initiator methionine" description="Removed" evidence="2">
    <location>
        <position position="1"/>
    </location>
</feature>
<feature type="chain" id="PRO_0000105956" description="Sulfate adenylyltransferase">
    <location>
        <begin position="2"/>
        <end position="420"/>
    </location>
</feature>
<feature type="modified residue" description="N-acetylalanine" evidence="2">
    <location>
        <position position="2"/>
    </location>
</feature>
<sequence length="420" mass="45878">MANVSPVHGGLSEPVNRVVDSLPSTELLPKIVVNATDYTTLHRIADGTLSPLTGPMTKADYDSVLLKKGIERDGKLWAWTIPLSLPVTAEEAKALKAGEPAALVSESGDVFGTLTVDAAFSWDKPAFLKAVYGTERTDHPGARLWLDDPRTDLVGGSISVLAHDEARPFKDRILYPQSMRALLKEQGYGASVAFQTRNPLHRAHEYALVYGAEKLLKEVGDSSKVGVFLNPLVGQLKGDDVPAATRMETYIKLIDGGFIGEGDMDEELWKSKGQNLREQTRLAGLDMRMFYGGPSEAVMHAIYRQNLGITHFIIGRKHADAPFDDKSAIWGDFDAQEIFEKLEGDLQIKTVNVGFAAYFEELGHVGLCSENKGKTTVSISGSKMREMLNSGSMPDSRVMRPATAQVLMDYYAAKNKSATA</sequence>
<proteinExistence type="evidence at protein level"/>
<evidence type="ECO:0000255" key="1"/>
<evidence type="ECO:0000269" key="2">
    <source ref="2"/>
</evidence>
<evidence type="ECO:0000269" key="3">
    <source ref="3"/>
</evidence>
<evidence type="ECO:0000269" key="4">
    <source ref="4"/>
</evidence>
<evidence type="ECO:0000305" key="5"/>
<evidence type="ECO:0000312" key="6">
    <source>
        <dbReference type="EMBL" id="BAD52446.1"/>
    </source>
</evidence>
<gene>
    <name evidence="6" type="primary">atps</name>
</gene>
<reference evidence="5 6" key="1">
    <citation type="submission" date="2004-10" db="EMBL/GenBank/DDBJ databases">
        <title>Cloning of cDNA coding for ATP-sulfurylase of Porphyra yezoensis.</title>
        <authorList>
            <person name="Kanno N."/>
            <person name="Kogami H."/>
        </authorList>
    </citation>
    <scope>NUCLEOTIDE SEQUENCE [MRNA]</scope>
    <source>
        <tissue evidence="6">Thallus</tissue>
    </source>
</reference>
<reference evidence="5 6" key="2">
    <citation type="submission" date="2004-10" db="UniProtKB">
        <authorList>
            <person name="Kanno N."/>
            <person name="Kogami H."/>
        </authorList>
    </citation>
    <scope>PROTEIN SEQUENCE OF 2-420</scope>
    <scope>ACETYLATION AT ALA-2</scope>
</reference>
<reference evidence="5" key="3">
    <citation type="journal article" date="1987" name="Nippon Suisan Gakkai Shi">
        <title>ATP-sulphurylase in marine algae.</title>
        <authorList>
            <person name="Kanno N."/>
            <person name="Sato M."/>
            <person name="Sato Y."/>
        </authorList>
    </citation>
    <scope>CATALYTIC ACTIVITY</scope>
</reference>
<reference evidence="5" key="4">
    <citation type="journal article" date="1988" name="Nippon Suisan Gakkai Shi">
        <title>Properties of ATP-sulphurylase from marine alga Porphyra yezoensis.</title>
        <authorList>
            <person name="Kanno N."/>
            <person name="Sato M."/>
            <person name="Sato Y."/>
        </authorList>
    </citation>
    <scope>CATALYTIC ACTIVITY</scope>
    <scope>COFACTOR</scope>
    <scope>ACTIVITY REGULATION</scope>
</reference>
<accession>Q60FC6</accession>